<dbReference type="EMBL" id="CP000879">
    <property type="protein sequence ID" value="ABX31517.1"/>
    <property type="molecule type" value="Genomic_DNA"/>
</dbReference>
<dbReference type="RefSeq" id="WP_012208620.1">
    <property type="nucleotide sequence ID" value="NC_010003.1"/>
</dbReference>
<dbReference type="SMR" id="A9BHA8"/>
<dbReference type="STRING" id="403833.Pmob_0793"/>
<dbReference type="KEGG" id="pmo:Pmob_0793"/>
<dbReference type="eggNOG" id="COG0480">
    <property type="taxonomic scope" value="Bacteria"/>
</dbReference>
<dbReference type="HOGENOM" id="CLU_002794_4_1_0"/>
<dbReference type="OrthoDB" id="9804431at2"/>
<dbReference type="Proteomes" id="UP000000789">
    <property type="component" value="Chromosome"/>
</dbReference>
<dbReference type="GO" id="GO:0005737">
    <property type="term" value="C:cytoplasm"/>
    <property type="evidence" value="ECO:0007669"/>
    <property type="project" value="UniProtKB-SubCell"/>
</dbReference>
<dbReference type="GO" id="GO:0005525">
    <property type="term" value="F:GTP binding"/>
    <property type="evidence" value="ECO:0007669"/>
    <property type="project" value="UniProtKB-UniRule"/>
</dbReference>
<dbReference type="GO" id="GO:0003924">
    <property type="term" value="F:GTPase activity"/>
    <property type="evidence" value="ECO:0007669"/>
    <property type="project" value="InterPro"/>
</dbReference>
<dbReference type="GO" id="GO:0003746">
    <property type="term" value="F:translation elongation factor activity"/>
    <property type="evidence" value="ECO:0007669"/>
    <property type="project" value="UniProtKB-UniRule"/>
</dbReference>
<dbReference type="GO" id="GO:0032790">
    <property type="term" value="P:ribosome disassembly"/>
    <property type="evidence" value="ECO:0007669"/>
    <property type="project" value="TreeGrafter"/>
</dbReference>
<dbReference type="CDD" id="cd01886">
    <property type="entry name" value="EF-G"/>
    <property type="match status" value="1"/>
</dbReference>
<dbReference type="CDD" id="cd16262">
    <property type="entry name" value="EFG_III"/>
    <property type="match status" value="1"/>
</dbReference>
<dbReference type="CDD" id="cd01434">
    <property type="entry name" value="EFG_mtEFG1_IV"/>
    <property type="match status" value="1"/>
</dbReference>
<dbReference type="CDD" id="cd03713">
    <property type="entry name" value="EFG_mtEFG_C"/>
    <property type="match status" value="1"/>
</dbReference>
<dbReference type="CDD" id="cd04088">
    <property type="entry name" value="EFG_mtEFG_II"/>
    <property type="match status" value="1"/>
</dbReference>
<dbReference type="FunFam" id="2.40.30.10:FF:000006">
    <property type="entry name" value="Elongation factor G"/>
    <property type="match status" value="1"/>
</dbReference>
<dbReference type="FunFam" id="3.30.230.10:FF:000003">
    <property type="entry name" value="Elongation factor G"/>
    <property type="match status" value="1"/>
</dbReference>
<dbReference type="FunFam" id="3.30.70.240:FF:000001">
    <property type="entry name" value="Elongation factor G"/>
    <property type="match status" value="1"/>
</dbReference>
<dbReference type="FunFam" id="3.30.70.870:FF:000001">
    <property type="entry name" value="Elongation factor G"/>
    <property type="match status" value="1"/>
</dbReference>
<dbReference type="FunFam" id="3.40.50.300:FF:000029">
    <property type="entry name" value="Elongation factor G"/>
    <property type="match status" value="1"/>
</dbReference>
<dbReference type="Gene3D" id="3.30.230.10">
    <property type="match status" value="1"/>
</dbReference>
<dbReference type="Gene3D" id="3.30.70.240">
    <property type="match status" value="1"/>
</dbReference>
<dbReference type="Gene3D" id="3.30.70.870">
    <property type="entry name" value="Elongation Factor G (Translational Gtpase), domain 3"/>
    <property type="match status" value="1"/>
</dbReference>
<dbReference type="Gene3D" id="3.40.50.300">
    <property type="entry name" value="P-loop containing nucleotide triphosphate hydrolases"/>
    <property type="match status" value="1"/>
</dbReference>
<dbReference type="Gene3D" id="2.40.30.10">
    <property type="entry name" value="Translation factors"/>
    <property type="match status" value="1"/>
</dbReference>
<dbReference type="HAMAP" id="MF_00054_B">
    <property type="entry name" value="EF_G_EF_2_B"/>
    <property type="match status" value="1"/>
</dbReference>
<dbReference type="InterPro" id="IPR053905">
    <property type="entry name" value="EF-G-like_DII"/>
</dbReference>
<dbReference type="InterPro" id="IPR041095">
    <property type="entry name" value="EFG_II"/>
</dbReference>
<dbReference type="InterPro" id="IPR009022">
    <property type="entry name" value="EFG_III"/>
</dbReference>
<dbReference type="InterPro" id="IPR035647">
    <property type="entry name" value="EFG_III/V"/>
</dbReference>
<dbReference type="InterPro" id="IPR047872">
    <property type="entry name" value="EFG_IV"/>
</dbReference>
<dbReference type="InterPro" id="IPR035649">
    <property type="entry name" value="EFG_V"/>
</dbReference>
<dbReference type="InterPro" id="IPR000640">
    <property type="entry name" value="EFG_V-like"/>
</dbReference>
<dbReference type="InterPro" id="IPR031157">
    <property type="entry name" value="G_TR_CS"/>
</dbReference>
<dbReference type="InterPro" id="IPR027417">
    <property type="entry name" value="P-loop_NTPase"/>
</dbReference>
<dbReference type="InterPro" id="IPR020568">
    <property type="entry name" value="Ribosomal_Su5_D2-typ_SF"/>
</dbReference>
<dbReference type="InterPro" id="IPR014721">
    <property type="entry name" value="Ribsml_uS5_D2-typ_fold_subgr"/>
</dbReference>
<dbReference type="InterPro" id="IPR005225">
    <property type="entry name" value="Small_GTP-bd"/>
</dbReference>
<dbReference type="InterPro" id="IPR000795">
    <property type="entry name" value="T_Tr_GTP-bd_dom"/>
</dbReference>
<dbReference type="InterPro" id="IPR009000">
    <property type="entry name" value="Transl_B-barrel_sf"/>
</dbReference>
<dbReference type="InterPro" id="IPR004540">
    <property type="entry name" value="Transl_elong_EFG/EF2"/>
</dbReference>
<dbReference type="InterPro" id="IPR005517">
    <property type="entry name" value="Transl_elong_EFG/EF2_IV"/>
</dbReference>
<dbReference type="NCBIfam" id="TIGR00484">
    <property type="entry name" value="EF-G"/>
    <property type="match status" value="1"/>
</dbReference>
<dbReference type="NCBIfam" id="NF009379">
    <property type="entry name" value="PRK12740.1-3"/>
    <property type="match status" value="1"/>
</dbReference>
<dbReference type="NCBIfam" id="NF009381">
    <property type="entry name" value="PRK12740.1-5"/>
    <property type="match status" value="1"/>
</dbReference>
<dbReference type="NCBIfam" id="NF009891">
    <property type="entry name" value="PRK13351.1-1"/>
    <property type="match status" value="1"/>
</dbReference>
<dbReference type="NCBIfam" id="TIGR00231">
    <property type="entry name" value="small_GTP"/>
    <property type="match status" value="1"/>
</dbReference>
<dbReference type="PANTHER" id="PTHR43261:SF1">
    <property type="entry name" value="RIBOSOME-RELEASING FACTOR 2, MITOCHONDRIAL"/>
    <property type="match status" value="1"/>
</dbReference>
<dbReference type="PANTHER" id="PTHR43261">
    <property type="entry name" value="TRANSLATION ELONGATION FACTOR G-RELATED"/>
    <property type="match status" value="1"/>
</dbReference>
<dbReference type="Pfam" id="PF22042">
    <property type="entry name" value="EF-G_D2"/>
    <property type="match status" value="1"/>
</dbReference>
<dbReference type="Pfam" id="PF00679">
    <property type="entry name" value="EFG_C"/>
    <property type="match status" value="1"/>
</dbReference>
<dbReference type="Pfam" id="PF14492">
    <property type="entry name" value="EFG_III"/>
    <property type="match status" value="1"/>
</dbReference>
<dbReference type="Pfam" id="PF03764">
    <property type="entry name" value="EFG_IV"/>
    <property type="match status" value="1"/>
</dbReference>
<dbReference type="Pfam" id="PF00009">
    <property type="entry name" value="GTP_EFTU"/>
    <property type="match status" value="1"/>
</dbReference>
<dbReference type="PRINTS" id="PR00315">
    <property type="entry name" value="ELONGATNFCT"/>
</dbReference>
<dbReference type="SMART" id="SM00838">
    <property type="entry name" value="EFG_C"/>
    <property type="match status" value="1"/>
</dbReference>
<dbReference type="SMART" id="SM00889">
    <property type="entry name" value="EFG_IV"/>
    <property type="match status" value="1"/>
</dbReference>
<dbReference type="SUPFAM" id="SSF54980">
    <property type="entry name" value="EF-G C-terminal domain-like"/>
    <property type="match status" value="2"/>
</dbReference>
<dbReference type="SUPFAM" id="SSF52540">
    <property type="entry name" value="P-loop containing nucleoside triphosphate hydrolases"/>
    <property type="match status" value="1"/>
</dbReference>
<dbReference type="SUPFAM" id="SSF54211">
    <property type="entry name" value="Ribosomal protein S5 domain 2-like"/>
    <property type="match status" value="1"/>
</dbReference>
<dbReference type="SUPFAM" id="SSF50447">
    <property type="entry name" value="Translation proteins"/>
    <property type="match status" value="1"/>
</dbReference>
<dbReference type="PROSITE" id="PS00301">
    <property type="entry name" value="G_TR_1"/>
    <property type="match status" value="1"/>
</dbReference>
<dbReference type="PROSITE" id="PS51722">
    <property type="entry name" value="G_TR_2"/>
    <property type="match status" value="1"/>
</dbReference>
<gene>
    <name evidence="1" type="primary">fusA</name>
    <name type="ordered locus">Pmob_0793</name>
</gene>
<organism>
    <name type="scientific">Petrotoga mobilis (strain DSM 10674 / SJ95)</name>
    <dbReference type="NCBI Taxonomy" id="403833"/>
    <lineage>
        <taxon>Bacteria</taxon>
        <taxon>Thermotogati</taxon>
        <taxon>Thermotogota</taxon>
        <taxon>Thermotogae</taxon>
        <taxon>Petrotogales</taxon>
        <taxon>Petrotogaceae</taxon>
        <taxon>Petrotoga</taxon>
    </lineage>
</organism>
<evidence type="ECO:0000255" key="1">
    <source>
        <dbReference type="HAMAP-Rule" id="MF_00054"/>
    </source>
</evidence>
<accession>A9BHA8</accession>
<name>EFG_PETMO</name>
<reference key="1">
    <citation type="submission" date="2007-11" db="EMBL/GenBank/DDBJ databases">
        <title>Complete sequence of Petroga mobilis SJ95.</title>
        <authorList>
            <consortium name="US DOE Joint Genome Institute"/>
            <person name="Copeland A."/>
            <person name="Lucas S."/>
            <person name="Lapidus A."/>
            <person name="Barry K."/>
            <person name="Glavina del Rio T."/>
            <person name="Dalin E."/>
            <person name="Tice H."/>
            <person name="Pitluck S."/>
            <person name="Meincke L."/>
            <person name="Brettin T."/>
            <person name="Bruce D."/>
            <person name="Detter J.C."/>
            <person name="Han C."/>
            <person name="Kuske C.R."/>
            <person name="Schmutz J."/>
            <person name="Larimer F."/>
            <person name="Land M."/>
            <person name="Hauser L."/>
            <person name="Kyrpides N."/>
            <person name="Mikhailova N."/>
            <person name="Noll K."/>
            <person name="Richardson P."/>
        </authorList>
    </citation>
    <scope>NUCLEOTIDE SEQUENCE [LARGE SCALE GENOMIC DNA]</scope>
    <source>
        <strain>DSM 10674 / SJ95</strain>
    </source>
</reference>
<sequence length="695" mass="77663">MKERLYPIEKIRNIGIVAHIDAGKTTTTERILFYTGTKHKLGNVDEGTTETDWMEQEKERGITITSAATSAFWKDHRINIIDTPGHVDFTVEVERSLRVLDGAIAVFDAQVGVEPQSETVWRQADRYRVPRIAFMNKMDKIGANFFNAIQTMKDKLGANPIALQVPIGSEAEFEGVVDLLTMEALYWTDENGQIIEKRSIPSNLIDFCESKREDLIAAVAEVDENIMELYIEEEEIPVDKLKEAIRTSTIQSKIVPVLCGSAFKNKGVQPLLDAVIDYLPSPLDMPPVKAFDGTTGEFVKDILPFEDGDFFALAFKIMADPFIGKLTFARVYSGTLNKGSYVVNTTKNKTERVSRLVFLHADKREEVDYIRAGDIVGLIGLKDTSTGDTLSDKECNLVLEKLEFPEPVISVSIEPETKDDEAKLGKALNALTEEDPSLRSYVDHDTGETILSGMGELHLEIIIDRIKREYKVNVKVGQPRVAYKETIKLPSEAEGKYIRQTGGRGQYGHVKLRVEPLPLNSEKEFEFVDKIVGGVIPREYIPAIENGVKESMQDGVLLGYPMVAIRVEVFDGSYHEVDSSEMAFKIAASMAFKDAIKKAKPVLLEPVMKVDVTTPEEYMGDIIADLSSRRGRIESFENVGGTNTRVVHAQVPLSELFGYATIMRSLSQGRATSSIQFSHYEEVPEQVTQKLLSRE</sequence>
<feature type="chain" id="PRO_1000074965" description="Elongation factor G">
    <location>
        <begin position="1"/>
        <end position="695"/>
    </location>
</feature>
<feature type="domain" description="tr-type G">
    <location>
        <begin position="9"/>
        <end position="283"/>
    </location>
</feature>
<feature type="binding site" evidence="1">
    <location>
        <begin position="18"/>
        <end position="25"/>
    </location>
    <ligand>
        <name>GTP</name>
        <dbReference type="ChEBI" id="CHEBI:37565"/>
    </ligand>
</feature>
<feature type="binding site" evidence="1">
    <location>
        <begin position="82"/>
        <end position="86"/>
    </location>
    <ligand>
        <name>GTP</name>
        <dbReference type="ChEBI" id="CHEBI:37565"/>
    </ligand>
</feature>
<feature type="binding site" evidence="1">
    <location>
        <begin position="136"/>
        <end position="139"/>
    </location>
    <ligand>
        <name>GTP</name>
        <dbReference type="ChEBI" id="CHEBI:37565"/>
    </ligand>
</feature>
<proteinExistence type="inferred from homology"/>
<protein>
    <recommendedName>
        <fullName evidence="1">Elongation factor G</fullName>
        <shortName evidence="1">EF-G</shortName>
    </recommendedName>
</protein>
<comment type="function">
    <text evidence="1">Catalyzes the GTP-dependent ribosomal translocation step during translation elongation. During this step, the ribosome changes from the pre-translocational (PRE) to the post-translocational (POST) state as the newly formed A-site-bound peptidyl-tRNA and P-site-bound deacylated tRNA move to the P and E sites, respectively. Catalyzes the coordinated movement of the two tRNA molecules, the mRNA and conformational changes in the ribosome.</text>
</comment>
<comment type="subcellular location">
    <subcellularLocation>
        <location evidence="1">Cytoplasm</location>
    </subcellularLocation>
</comment>
<comment type="similarity">
    <text evidence="1">Belongs to the TRAFAC class translation factor GTPase superfamily. Classic translation factor GTPase family. EF-G/EF-2 subfamily.</text>
</comment>
<keyword id="KW-0963">Cytoplasm</keyword>
<keyword id="KW-0251">Elongation factor</keyword>
<keyword id="KW-0342">GTP-binding</keyword>
<keyword id="KW-0547">Nucleotide-binding</keyword>
<keyword id="KW-0648">Protein biosynthesis</keyword>